<evidence type="ECO:0000255" key="1">
    <source>
        <dbReference type="PROSITE-ProRule" id="PRU00042"/>
    </source>
</evidence>
<evidence type="ECO:0000255" key="2">
    <source>
        <dbReference type="PROSITE-ProRule" id="PRU00119"/>
    </source>
</evidence>
<evidence type="ECO:0000256" key="3">
    <source>
        <dbReference type="SAM" id="MobiDB-lite"/>
    </source>
</evidence>
<protein>
    <recommendedName>
        <fullName>Zinc finger protein 728</fullName>
    </recommendedName>
</protein>
<organism>
    <name type="scientific">Mus musculus</name>
    <name type="common">Mouse</name>
    <dbReference type="NCBI Taxonomy" id="10090"/>
    <lineage>
        <taxon>Eukaryota</taxon>
        <taxon>Metazoa</taxon>
        <taxon>Chordata</taxon>
        <taxon>Craniata</taxon>
        <taxon>Vertebrata</taxon>
        <taxon>Euteleostomi</taxon>
        <taxon>Mammalia</taxon>
        <taxon>Eutheria</taxon>
        <taxon>Euarchontoglires</taxon>
        <taxon>Glires</taxon>
        <taxon>Rodentia</taxon>
        <taxon>Myomorpha</taxon>
        <taxon>Muroidea</taxon>
        <taxon>Muridae</taxon>
        <taxon>Murinae</taxon>
        <taxon>Mus</taxon>
        <taxon>Mus</taxon>
    </lineage>
</organism>
<keyword id="KW-0479">Metal-binding</keyword>
<keyword id="KW-1185">Reference proteome</keyword>
<keyword id="KW-0677">Repeat</keyword>
<keyword id="KW-0862">Zinc</keyword>
<keyword id="KW-0863">Zinc-finger</keyword>
<sequence>MEDMLSFWDVAIYFSAEEWECLGPAQWKLYRDVMLENYSNLVFLGLASSKPYLVTFLEQIQEPSDVKRQAAITVHPGGKCYTCKECGKGFEHKKVYQNHRRIHLRVKSYKCEECGKSFRFPSLLSAHKRNHTGQKPYNCEICSKAFHVPSLLSVHKRIHRVQKPYKSEDYGKTLHCPSLLSQHKIVHTGEKPYQCEDLGKAFRYPSRLSNHKKIHTGEKPHKCEVCGKAFDYPSRLSNHKRIHTGEKPYKCEVCGKAFHDPSKLSQHKIIHTGEKPYKCEVCGKTFHYPSILSKHKIIHTKENLCKCDICGKAFHYPLLLSQHKIVHTGEKPYKCEDCGKAFYYPSRLSRHKKIHTGEKPYKCEVCGKAFYYLSILSKHMIVHTEENPYKCEVCGKAFDYPSRLSNHKKIHTEDKPHKCEVCGNAFCFSSSLRKHKIIHTGEKPYKCDICGKAFGSPSRLSKHNKIHTEDKPYKCEVCGKAFHFPSLLLVHKRIHTGEKPYKCEVCGKAFYCLSTLSVHKRIHTGEYAYKCEVCGKAFHCLSTLSVHKRIHTQEKPYKCEVCGQAFHASSKLSHHKRIHSGEKPHKCEICGKSFYYPSRLSKHKVIHTGEKPYHSQASGKTLDYPSRHSKPKTIKTGEKPNKCEICGKAFSFPSLLSIHKRIHIGEKPYNCEVCGKAFRNPSRLSNHKKIHTGEKPYKCEICGKAFDYPSLLSKHKIIHTGEKPYHSEVCGKAFSYSSRISKDKKICTGEKP</sequence>
<reference key="1">
    <citation type="journal article" date="2009" name="PLoS Biol.">
        <title>Lineage-specific biology revealed by a finished genome assembly of the mouse.</title>
        <authorList>
            <person name="Church D.M."/>
            <person name="Goodstadt L."/>
            <person name="Hillier L.W."/>
            <person name="Zody M.C."/>
            <person name="Goldstein S."/>
            <person name="She X."/>
            <person name="Bult C.J."/>
            <person name="Agarwala R."/>
            <person name="Cherry J.L."/>
            <person name="DiCuccio M."/>
            <person name="Hlavina W."/>
            <person name="Kapustin Y."/>
            <person name="Meric P."/>
            <person name="Maglott D."/>
            <person name="Birtle Z."/>
            <person name="Marques A.C."/>
            <person name="Graves T."/>
            <person name="Zhou S."/>
            <person name="Teague B."/>
            <person name="Potamousis K."/>
            <person name="Churas C."/>
            <person name="Place M."/>
            <person name="Herschleb J."/>
            <person name="Runnheim R."/>
            <person name="Forrest D."/>
            <person name="Amos-Landgraf J."/>
            <person name="Schwartz D.C."/>
            <person name="Cheng Z."/>
            <person name="Lindblad-Toh K."/>
            <person name="Eichler E.E."/>
            <person name="Ponting C.P."/>
        </authorList>
    </citation>
    <scope>NUCLEOTIDE SEQUENCE [LARGE SCALE GENOMIC DNA]</scope>
    <source>
        <strain>C57BL/6J</strain>
    </source>
</reference>
<reference key="2">
    <citation type="journal article" date="2004" name="Genome Res.">
        <title>The status, quality, and expansion of the NIH full-length cDNA project: the Mammalian Gene Collection (MGC).</title>
        <authorList>
            <consortium name="The MGC Project Team"/>
        </authorList>
    </citation>
    <scope>NUCLEOTIDE SEQUENCE [LARGE SCALE MRNA]</scope>
    <source>
        <strain>C57BL/6J</strain>
        <tissue>Eye</tissue>
    </source>
</reference>
<proteinExistence type="evidence at transcript level"/>
<feature type="chain" id="PRO_0000421024" description="Zinc finger protein 728">
    <location>
        <begin position="1"/>
        <end position="752"/>
    </location>
</feature>
<feature type="domain" description="KRAB" evidence="2">
    <location>
        <begin position="5"/>
        <end position="76"/>
    </location>
</feature>
<feature type="zinc finger region" description="C2H2-type 1" evidence="1">
    <location>
        <begin position="81"/>
        <end position="103"/>
    </location>
</feature>
<feature type="zinc finger region" description="C2H2-type 2" evidence="1">
    <location>
        <begin position="109"/>
        <end position="131"/>
    </location>
</feature>
<feature type="zinc finger region" description="C2H2-type 3" evidence="1">
    <location>
        <begin position="137"/>
        <end position="159"/>
    </location>
</feature>
<feature type="zinc finger region" description="C2H2-type 4; degenerate" evidence="1">
    <location>
        <begin position="165"/>
        <end position="187"/>
    </location>
</feature>
<feature type="zinc finger region" description="C2H2-type 5; degenerate" evidence="1">
    <location>
        <begin position="193"/>
        <end position="215"/>
    </location>
</feature>
<feature type="zinc finger region" description="C2H2-type 6" evidence="1">
    <location>
        <begin position="221"/>
        <end position="243"/>
    </location>
</feature>
<feature type="zinc finger region" description="C2H2-type 7" evidence="1">
    <location>
        <begin position="249"/>
        <end position="271"/>
    </location>
</feature>
<feature type="zinc finger region" description="C2H2-type 8" evidence="1">
    <location>
        <begin position="277"/>
        <end position="299"/>
    </location>
</feature>
<feature type="zinc finger region" description="C2H2-type 9" evidence="1">
    <location>
        <begin position="305"/>
        <end position="327"/>
    </location>
</feature>
<feature type="zinc finger region" description="C2H2-type 10" evidence="1">
    <location>
        <begin position="333"/>
        <end position="355"/>
    </location>
</feature>
<feature type="zinc finger region" description="C2H2-type 11" evidence="1">
    <location>
        <begin position="361"/>
        <end position="383"/>
    </location>
</feature>
<feature type="zinc finger region" description="C2H2-type 12" evidence="1">
    <location>
        <begin position="389"/>
        <end position="411"/>
    </location>
</feature>
<feature type="zinc finger region" description="C2H2-type 13" evidence="1">
    <location>
        <begin position="417"/>
        <end position="439"/>
    </location>
</feature>
<feature type="zinc finger region" description="C2H2-type 14" evidence="1">
    <location>
        <begin position="445"/>
        <end position="467"/>
    </location>
</feature>
<feature type="zinc finger region" description="C2H2-type 15" evidence="1">
    <location>
        <begin position="473"/>
        <end position="495"/>
    </location>
</feature>
<feature type="zinc finger region" description="C2H2-type 16" evidence="1">
    <location>
        <begin position="501"/>
        <end position="523"/>
    </location>
</feature>
<feature type="zinc finger region" description="C2H2-type 17" evidence="1">
    <location>
        <begin position="529"/>
        <end position="551"/>
    </location>
</feature>
<feature type="zinc finger region" description="C2H2-type 18" evidence="1">
    <location>
        <begin position="557"/>
        <end position="579"/>
    </location>
</feature>
<feature type="zinc finger region" description="C2H2-type 19" evidence="1">
    <location>
        <begin position="585"/>
        <end position="607"/>
    </location>
</feature>
<feature type="zinc finger region" description="C2H2-type 20" evidence="1">
    <location>
        <begin position="641"/>
        <end position="663"/>
    </location>
</feature>
<feature type="zinc finger region" description="C2H2-type 21" evidence="1">
    <location>
        <begin position="669"/>
        <end position="691"/>
    </location>
</feature>
<feature type="zinc finger region" description="C2H2-type 22" evidence="1">
    <location>
        <begin position="697"/>
        <end position="719"/>
    </location>
</feature>
<feature type="zinc finger region" description="C2H2-type 23; degenerate" evidence="1">
    <location>
        <begin position="725"/>
        <end position="747"/>
    </location>
</feature>
<feature type="region of interest" description="Disordered" evidence="3">
    <location>
        <begin position="611"/>
        <end position="636"/>
    </location>
</feature>
<name>ZN728_MOUSE</name>
<accession>Q6P5C7</accession>
<dbReference type="EMBL" id="AC159264">
    <property type="status" value="NOT_ANNOTATED_CDS"/>
    <property type="molecule type" value="Genomic_DNA"/>
</dbReference>
<dbReference type="EMBL" id="AC163667">
    <property type="status" value="NOT_ANNOTATED_CDS"/>
    <property type="molecule type" value="Genomic_DNA"/>
</dbReference>
<dbReference type="EMBL" id="BC062958">
    <property type="protein sequence ID" value="AAH62958.1"/>
    <property type="molecule type" value="mRNA"/>
</dbReference>
<dbReference type="CCDS" id="CCDS36710.1"/>
<dbReference type="RefSeq" id="NP_001001152.1">
    <property type="nucleotide sequence ID" value="NM_001001152.2"/>
</dbReference>
<dbReference type="SMR" id="Q6P5C7"/>
<dbReference type="STRING" id="10090.ENSMUSP00000047222"/>
<dbReference type="PhosphoSitePlus" id="Q6P5C7"/>
<dbReference type="PaxDb" id="10090-ENSMUSP00000047222"/>
<dbReference type="ProteomicsDB" id="275297"/>
<dbReference type="DNASU" id="238690"/>
<dbReference type="Ensembl" id="ENSMUST00000045969.8">
    <property type="protein sequence ID" value="ENSMUSP00000047222.8"/>
    <property type="gene ID" value="ENSMUSG00000055480.8"/>
</dbReference>
<dbReference type="GeneID" id="238690"/>
<dbReference type="KEGG" id="mmu:238690"/>
<dbReference type="UCSC" id="uc007ral.1">
    <property type="organism name" value="mouse"/>
</dbReference>
<dbReference type="AGR" id="MGI:3040691"/>
<dbReference type="CTD" id="238690"/>
<dbReference type="MGI" id="MGI:3040691">
    <property type="gene designation" value="Zfp458"/>
</dbReference>
<dbReference type="VEuPathDB" id="HostDB:ENSMUSG00000055480"/>
<dbReference type="eggNOG" id="KOG1721">
    <property type="taxonomic scope" value="Eukaryota"/>
</dbReference>
<dbReference type="GeneTree" id="ENSGT00940000155274"/>
<dbReference type="HOGENOM" id="CLU_002678_17_1_1"/>
<dbReference type="InParanoid" id="Q6P5C7"/>
<dbReference type="OMA" id="EFKQPSI"/>
<dbReference type="OrthoDB" id="9537077at2759"/>
<dbReference type="PhylomeDB" id="Q6P5C7"/>
<dbReference type="TreeFam" id="TF343410"/>
<dbReference type="Reactome" id="R-MMU-212436">
    <property type="pathway name" value="Generic Transcription Pathway"/>
</dbReference>
<dbReference type="BioGRID-ORCS" id="238690">
    <property type="hits" value="2 hits in 75 CRISPR screens"/>
</dbReference>
<dbReference type="ChiTaRS" id="Zfp458">
    <property type="organism name" value="mouse"/>
</dbReference>
<dbReference type="PRO" id="PR:Q6P5C7"/>
<dbReference type="Proteomes" id="UP000000589">
    <property type="component" value="Chromosome 13"/>
</dbReference>
<dbReference type="RNAct" id="Q6P5C7">
    <property type="molecule type" value="protein"/>
</dbReference>
<dbReference type="Bgee" id="ENSMUSG00000055480">
    <property type="expression patterns" value="Expressed in rostral migratory stream and 185 other cell types or tissues"/>
</dbReference>
<dbReference type="ExpressionAtlas" id="Q6P5C7">
    <property type="expression patterns" value="baseline and differential"/>
</dbReference>
<dbReference type="GO" id="GO:0008270">
    <property type="term" value="F:zinc ion binding"/>
    <property type="evidence" value="ECO:0007669"/>
    <property type="project" value="UniProtKB-KW"/>
</dbReference>
<dbReference type="GO" id="GO:0006355">
    <property type="term" value="P:regulation of DNA-templated transcription"/>
    <property type="evidence" value="ECO:0007669"/>
    <property type="project" value="InterPro"/>
</dbReference>
<dbReference type="CDD" id="cd07765">
    <property type="entry name" value="KRAB_A-box"/>
    <property type="match status" value="1"/>
</dbReference>
<dbReference type="FunFam" id="3.30.160.60:FF:000557">
    <property type="entry name" value="zinc finger and SCAN domain-containing protein 29"/>
    <property type="match status" value="1"/>
</dbReference>
<dbReference type="FunFam" id="3.30.160.60:FF:000446">
    <property type="entry name" value="Zinc finger protein"/>
    <property type="match status" value="1"/>
</dbReference>
<dbReference type="FunFam" id="3.30.160.60:FF:000005">
    <property type="entry name" value="Zinc finger protein 14 homolog"/>
    <property type="match status" value="1"/>
</dbReference>
<dbReference type="FunFam" id="3.30.160.60:FF:002239">
    <property type="entry name" value="Zinc finger protein 226"/>
    <property type="match status" value="2"/>
</dbReference>
<dbReference type="FunFam" id="3.30.160.60:FF:001181">
    <property type="entry name" value="Zinc finger protein 311"/>
    <property type="match status" value="10"/>
</dbReference>
<dbReference type="FunFam" id="3.30.160.60:FF:000690">
    <property type="entry name" value="Zinc finger protein 354C"/>
    <property type="match status" value="2"/>
</dbReference>
<dbReference type="FunFam" id="3.30.160.60:FF:000454">
    <property type="entry name" value="Zinc finger protein 624"/>
    <property type="match status" value="1"/>
</dbReference>
<dbReference type="FunFam" id="3.30.160.60:FF:001630">
    <property type="entry name" value="Zinc finger protein 888"/>
    <property type="match status" value="1"/>
</dbReference>
<dbReference type="FunFam" id="3.30.160.60:FF:000307">
    <property type="entry name" value="Zinc finger protein ZFP69 isoform 1"/>
    <property type="match status" value="1"/>
</dbReference>
<dbReference type="FunFam" id="3.30.160.60:FF:000634">
    <property type="entry name" value="Zinc finger X-chromosomal protein"/>
    <property type="match status" value="1"/>
</dbReference>
<dbReference type="Gene3D" id="6.10.140.140">
    <property type="match status" value="1"/>
</dbReference>
<dbReference type="Gene3D" id="3.30.160.60">
    <property type="entry name" value="Classic Zinc Finger"/>
    <property type="match status" value="23"/>
</dbReference>
<dbReference type="InterPro" id="IPR001909">
    <property type="entry name" value="KRAB"/>
</dbReference>
<dbReference type="InterPro" id="IPR036051">
    <property type="entry name" value="KRAB_dom_sf"/>
</dbReference>
<dbReference type="InterPro" id="IPR036236">
    <property type="entry name" value="Znf_C2H2_sf"/>
</dbReference>
<dbReference type="InterPro" id="IPR013087">
    <property type="entry name" value="Znf_C2H2_type"/>
</dbReference>
<dbReference type="PANTHER" id="PTHR24379">
    <property type="entry name" value="KRAB AND ZINC FINGER DOMAIN-CONTAINING"/>
    <property type="match status" value="1"/>
</dbReference>
<dbReference type="PANTHER" id="PTHR24379:SF131">
    <property type="entry name" value="ZINC FINGER PROTEIN 737-LIKE-RELATED"/>
    <property type="match status" value="1"/>
</dbReference>
<dbReference type="Pfam" id="PF01352">
    <property type="entry name" value="KRAB"/>
    <property type="match status" value="1"/>
</dbReference>
<dbReference type="Pfam" id="PF00096">
    <property type="entry name" value="zf-C2H2"/>
    <property type="match status" value="14"/>
</dbReference>
<dbReference type="SMART" id="SM00349">
    <property type="entry name" value="KRAB"/>
    <property type="match status" value="1"/>
</dbReference>
<dbReference type="SMART" id="SM00355">
    <property type="entry name" value="ZnF_C2H2"/>
    <property type="match status" value="21"/>
</dbReference>
<dbReference type="SUPFAM" id="SSF57667">
    <property type="entry name" value="beta-beta-alpha zinc fingers"/>
    <property type="match status" value="12"/>
</dbReference>
<dbReference type="SUPFAM" id="SSF109640">
    <property type="entry name" value="KRAB domain (Kruppel-associated box)"/>
    <property type="match status" value="1"/>
</dbReference>
<dbReference type="PROSITE" id="PS50805">
    <property type="entry name" value="KRAB"/>
    <property type="match status" value="1"/>
</dbReference>
<dbReference type="PROSITE" id="PS00028">
    <property type="entry name" value="ZINC_FINGER_C2H2_1"/>
    <property type="match status" value="20"/>
</dbReference>
<dbReference type="PROSITE" id="PS50157">
    <property type="entry name" value="ZINC_FINGER_C2H2_2"/>
    <property type="match status" value="23"/>
</dbReference>
<gene>
    <name type="primary">Znf728</name>
    <name type="synonym">Zfp458</name>
</gene>